<dbReference type="EC" id="1.3.1.20"/>
<dbReference type="EC" id="1.1.1.179"/>
<dbReference type="EMBL" id="AB021929">
    <property type="protein sequence ID" value="BAA83486.1"/>
    <property type="molecule type" value="mRNA"/>
</dbReference>
<dbReference type="RefSeq" id="NP_999331.1">
    <property type="nucleotide sequence ID" value="NM_214166.1"/>
</dbReference>
<dbReference type="SMR" id="Q9TV69"/>
<dbReference type="FunCoup" id="Q9TV69">
    <property type="interactions" value="558"/>
</dbReference>
<dbReference type="STRING" id="9823.ENSSSCP00000003404"/>
<dbReference type="PaxDb" id="9823-ENSSSCP00000003425"/>
<dbReference type="PeptideAtlas" id="Q9TV69"/>
<dbReference type="Ensembl" id="ENSSSCT00000003487.5">
    <property type="protein sequence ID" value="ENSSSCP00000003404.5"/>
    <property type="gene ID" value="ENSSSCG00000003144.5"/>
</dbReference>
<dbReference type="Ensembl" id="ENSSSCT00025026338.1">
    <property type="protein sequence ID" value="ENSSSCP00025011146.1"/>
    <property type="gene ID" value="ENSSSCG00025019423.1"/>
</dbReference>
<dbReference type="Ensembl" id="ENSSSCT00030092231.1">
    <property type="protein sequence ID" value="ENSSSCP00030042439.1"/>
    <property type="gene ID" value="ENSSSCG00030065918.1"/>
</dbReference>
<dbReference type="Ensembl" id="ENSSSCT00045019357.1">
    <property type="protein sequence ID" value="ENSSSCP00045013278.1"/>
    <property type="gene ID" value="ENSSSCG00045011300.1"/>
</dbReference>
<dbReference type="Ensembl" id="ENSSSCT00050105630.1">
    <property type="protein sequence ID" value="ENSSSCP00050046507.1"/>
    <property type="gene ID" value="ENSSSCG00050076835.1"/>
</dbReference>
<dbReference type="Ensembl" id="ENSSSCT00070055699.1">
    <property type="protein sequence ID" value="ENSSSCP00070047308.1"/>
    <property type="gene ID" value="ENSSSCG00070027762.1"/>
</dbReference>
<dbReference type="Ensembl" id="ENSSSCT00105079683">
    <property type="protein sequence ID" value="ENSSSCP00105056369"/>
    <property type="gene ID" value="ENSSSCG00105041953"/>
</dbReference>
<dbReference type="Ensembl" id="ENSSSCT00110068629">
    <property type="protein sequence ID" value="ENSSSCP00110048254"/>
    <property type="gene ID" value="ENSSSCG00110036127"/>
</dbReference>
<dbReference type="Ensembl" id="ENSSSCT00130074749">
    <property type="protein sequence ID" value="ENSSSCP00130053717"/>
    <property type="gene ID" value="ENSSSCG00130038343"/>
</dbReference>
<dbReference type="GeneID" id="397337"/>
<dbReference type="KEGG" id="ssc:397337"/>
<dbReference type="CTD" id="27294"/>
<dbReference type="eggNOG" id="KOG2741">
    <property type="taxonomic scope" value="Eukaryota"/>
</dbReference>
<dbReference type="GeneTree" id="ENSGT00390000007946"/>
<dbReference type="HOGENOM" id="CLU_023194_7_2_1"/>
<dbReference type="InParanoid" id="Q9TV69"/>
<dbReference type="OMA" id="AHETGKY"/>
<dbReference type="OrthoDB" id="2129491at2759"/>
<dbReference type="TreeFam" id="TF324504"/>
<dbReference type="SABIO-RK" id="Q9TV69"/>
<dbReference type="Proteomes" id="UP000008227">
    <property type="component" value="Chromosome 6"/>
</dbReference>
<dbReference type="Proteomes" id="UP000314985">
    <property type="component" value="Chromosome 6"/>
</dbReference>
<dbReference type="Proteomes" id="UP000694570">
    <property type="component" value="Unplaced"/>
</dbReference>
<dbReference type="Proteomes" id="UP000694571">
    <property type="component" value="Unplaced"/>
</dbReference>
<dbReference type="Proteomes" id="UP000694720">
    <property type="component" value="Unplaced"/>
</dbReference>
<dbReference type="Proteomes" id="UP000694722">
    <property type="component" value="Unplaced"/>
</dbReference>
<dbReference type="Proteomes" id="UP000694723">
    <property type="component" value="Unplaced"/>
</dbReference>
<dbReference type="Proteomes" id="UP000694724">
    <property type="component" value="Unplaced"/>
</dbReference>
<dbReference type="Proteomes" id="UP000694725">
    <property type="component" value="Unplaced"/>
</dbReference>
<dbReference type="Proteomes" id="UP000694726">
    <property type="component" value="Unplaced"/>
</dbReference>
<dbReference type="Proteomes" id="UP000694727">
    <property type="component" value="Unplaced"/>
</dbReference>
<dbReference type="Proteomes" id="UP000694728">
    <property type="component" value="Unplaced"/>
</dbReference>
<dbReference type="GO" id="GO:0047837">
    <property type="term" value="F:D-xylose 1-dehydrogenase (NADP+) activity"/>
    <property type="evidence" value="ECO:0007669"/>
    <property type="project" value="UniProtKB-EC"/>
</dbReference>
<dbReference type="GO" id="GO:0000166">
    <property type="term" value="F:nucleotide binding"/>
    <property type="evidence" value="ECO:0007669"/>
    <property type="project" value="InterPro"/>
</dbReference>
<dbReference type="GO" id="GO:0047115">
    <property type="term" value="F:trans-1,2-dihydrobenzene-1,2-diol dehydrogenase activity"/>
    <property type="evidence" value="ECO:0007669"/>
    <property type="project" value="UniProtKB-EC"/>
</dbReference>
<dbReference type="GO" id="GO:0042843">
    <property type="term" value="P:D-xylose catabolic process"/>
    <property type="evidence" value="ECO:0007669"/>
    <property type="project" value="Ensembl"/>
</dbReference>
<dbReference type="FunFam" id="3.30.360.10:FF:000031">
    <property type="entry name" value="Trans-1,2-dihydrobenzene-1,2-diol dehydrogenase"/>
    <property type="match status" value="1"/>
</dbReference>
<dbReference type="FunFam" id="3.40.50.720:FF:000269">
    <property type="entry name" value="Trans-1,2-dihydrobenzene-1,2-diol dehydrogenase"/>
    <property type="match status" value="1"/>
</dbReference>
<dbReference type="Gene3D" id="3.30.360.10">
    <property type="entry name" value="Dihydrodipicolinate Reductase, domain 2"/>
    <property type="match status" value="1"/>
</dbReference>
<dbReference type="Gene3D" id="3.40.50.720">
    <property type="entry name" value="NAD(P)-binding Rossmann-like Domain"/>
    <property type="match status" value="1"/>
</dbReference>
<dbReference type="InterPro" id="IPR000683">
    <property type="entry name" value="Gfo/Idh/MocA-like_OxRdtase_N"/>
</dbReference>
<dbReference type="InterPro" id="IPR050984">
    <property type="entry name" value="Gfo/Idh/MocA_domain"/>
</dbReference>
<dbReference type="InterPro" id="IPR055170">
    <property type="entry name" value="GFO_IDH_MocA-like_dom"/>
</dbReference>
<dbReference type="InterPro" id="IPR036291">
    <property type="entry name" value="NAD(P)-bd_dom_sf"/>
</dbReference>
<dbReference type="PANTHER" id="PTHR22604">
    <property type="entry name" value="OXIDOREDUCTASES"/>
    <property type="match status" value="1"/>
</dbReference>
<dbReference type="PANTHER" id="PTHR22604:SF105">
    <property type="entry name" value="TRANS-1,2-DIHYDROBENZENE-1,2-DIOL DEHYDROGENASE"/>
    <property type="match status" value="1"/>
</dbReference>
<dbReference type="Pfam" id="PF01408">
    <property type="entry name" value="GFO_IDH_MocA"/>
    <property type="match status" value="1"/>
</dbReference>
<dbReference type="Pfam" id="PF22725">
    <property type="entry name" value="GFO_IDH_MocA_C3"/>
    <property type="match status" value="1"/>
</dbReference>
<dbReference type="SUPFAM" id="SSF55347">
    <property type="entry name" value="Glyceraldehyde-3-phosphate dehydrogenase-like, C-terminal domain"/>
    <property type="match status" value="1"/>
</dbReference>
<dbReference type="SUPFAM" id="SSF51735">
    <property type="entry name" value="NAD(P)-binding Rossmann-fold domains"/>
    <property type="match status" value="1"/>
</dbReference>
<accession>Q9TV69</accession>
<comment type="catalytic activity">
    <reaction>
        <text>(1R,2R)-1,2-dihydrobenzene-1,2-diol + NADP(+) = catechol + NADPH + H(+)</text>
        <dbReference type="Rhea" id="RHEA:16729"/>
        <dbReference type="ChEBI" id="CHEBI:10702"/>
        <dbReference type="ChEBI" id="CHEBI:15378"/>
        <dbReference type="ChEBI" id="CHEBI:18135"/>
        <dbReference type="ChEBI" id="CHEBI:57783"/>
        <dbReference type="ChEBI" id="CHEBI:58349"/>
        <dbReference type="EC" id="1.3.1.20"/>
    </reaction>
</comment>
<comment type="catalytic activity">
    <reaction>
        <text>D-xylose + NADP(+) = D-xylono-1,5-lactone + NADPH + H(+)</text>
        <dbReference type="Rhea" id="RHEA:22000"/>
        <dbReference type="ChEBI" id="CHEBI:15378"/>
        <dbReference type="ChEBI" id="CHEBI:15867"/>
        <dbReference type="ChEBI" id="CHEBI:53455"/>
        <dbReference type="ChEBI" id="CHEBI:57783"/>
        <dbReference type="ChEBI" id="CHEBI:58349"/>
        <dbReference type="EC" id="1.1.1.179"/>
    </reaction>
</comment>
<comment type="activity regulation">
    <text evidence="2 3">Strongly inhibited by isoascorbic acid, 4-hydroxyacetophenone and chloromercuriphenylsulphonate. Stimulated by various salts.</text>
</comment>
<comment type="biophysicochemical properties">
    <kinetics>
        <KM evidence="2 3">0.24 mM for benzene dihydrodiol (at pH 7.5)</KM>
        <KM evidence="2 3">0.8 mM for D-xylose (at pH 7.5)</KM>
        <Vmax evidence="2 3">0.56 umol/min/mg enzyme with benzene dihydrodiol as substrate</Vmax>
        <Vmax evidence="2 3">3.3 umol/min/mg enzyme with D-xylose as substrate</Vmax>
    </kinetics>
</comment>
<comment type="subunit">
    <text evidence="1">Homodimer.</text>
</comment>
<comment type="tissue specificity">
    <text evidence="1">Liver, lens, spleen, kidney and small intestine.</text>
</comment>
<comment type="similarity">
    <text evidence="4">Belongs to the Gfo/Idh/MocA family.</text>
</comment>
<keyword id="KW-0903">Direct protein sequencing</keyword>
<keyword id="KW-0521">NADP</keyword>
<keyword id="KW-0560">Oxidoreductase</keyword>
<keyword id="KW-1185">Reference proteome</keyword>
<protein>
    <recommendedName>
        <fullName>Trans-1,2-dihydrobenzene-1,2-diol dehydrogenase</fullName>
        <ecNumber>1.3.1.20</ecNumber>
    </recommendedName>
    <alternativeName>
        <fullName>D-xylose 1-dehydrogenase</fullName>
    </alternativeName>
    <alternativeName>
        <fullName>D-xylose-NADP dehydrogenase</fullName>
        <ecNumber>1.1.1.179</ecNumber>
    </alternativeName>
    <alternativeName>
        <fullName>Dimeric dihydrodiol dehydrogenase</fullName>
    </alternativeName>
    <alternativeName>
        <fullName>Sus2DD</fullName>
    </alternativeName>
</protein>
<sequence>MALRWGIVSAGLISSDFTTVLRLLPRSEHQVVAVAARDLSRAKEFARKHDIPKAYGSYEELAKDPNVEVAYIGTQHPQHKATVLLCLAAGKAVLCEKPMGVNAAEVREMVAEARSRGLFLMEAIWTRFFPAVEALRSVLAQETLGDLRVVQANFGKSIANVPRSVDWAQAGGSLLDLGIYCLQFISMVYGGQKPEKISAVGRRYETGVDDTVSVLLQYPGGVQGSFTCSITSQLSNTVSVSGTKGMAQILDPCWCPTELVVKGEHKEFPLPSAPGEEFNYTNGMGMCYEAKHVRECLKKGLKESPMITLAESELLADILEEVRKAIGVTFPQDKC</sequence>
<name>DHDH_PIG</name>
<organism>
    <name type="scientific">Sus scrofa</name>
    <name type="common">Pig</name>
    <dbReference type="NCBI Taxonomy" id="9823"/>
    <lineage>
        <taxon>Eukaryota</taxon>
        <taxon>Metazoa</taxon>
        <taxon>Chordata</taxon>
        <taxon>Craniata</taxon>
        <taxon>Vertebrata</taxon>
        <taxon>Euteleostomi</taxon>
        <taxon>Mammalia</taxon>
        <taxon>Eutheria</taxon>
        <taxon>Laurasiatheria</taxon>
        <taxon>Artiodactyla</taxon>
        <taxon>Suina</taxon>
        <taxon>Suidae</taxon>
        <taxon>Sus</taxon>
    </lineage>
</organism>
<reference key="1">
    <citation type="journal article" date="1999" name="Biochem. J.">
        <title>Cloning and sequencing of the cDNA species for mammalian dimeric dihydrodiol dehydrogenases.</title>
        <authorList>
            <person name="Arimitsu E."/>
            <person name="Aoki S."/>
            <person name="Ishikura S."/>
            <person name="Nakanishi K."/>
            <person name="Matsuura K."/>
            <person name="Hara A."/>
        </authorList>
    </citation>
    <scope>NUCLEOTIDE SEQUENCE [MRNA]</scope>
    <scope>PROTEIN SEQUENCE OF 54-77; 157-184; 245-259; 303-318 AND 325-334</scope>
    <scope>SUBUNIT</scope>
    <scope>TISSUE SPECIFICITY</scope>
    <source>
        <tissue>Liver</tissue>
    </source>
</reference>
<reference key="2">
    <citation type="journal article" date="1991" name="Biochem. J.">
        <title>Inhibition of dimeric dihydrodiol dehydrogenases of rabbit and pig lens by ascorbic acid.</title>
        <authorList>
            <person name="Hara A."/>
            <person name="Shinoda M."/>
            <person name="Kanazu T."/>
            <person name="Nakayama T."/>
            <person name="Deyashiki Y."/>
            <person name="Sawada H."/>
        </authorList>
    </citation>
    <scope>ACTIVITY REGULATION</scope>
    <scope>BIOPHYSICOCHEMICAL PROPERTIES</scope>
    <source>
        <tissue>Lens</tissue>
    </source>
</reference>
<reference key="3">
    <citation type="journal article" date="2001" name="Chem. Biol. Interact.">
        <title>Identity of dimeric dihydrodiol dehydrogenase as NADP(+)-dependent D-xylose dehydrogenase in pig liver.</title>
        <authorList>
            <person name="Aoki S."/>
            <person name="Ishikura S."/>
            <person name="Asada Y."/>
            <person name="Usami N."/>
            <person name="Hara A."/>
        </authorList>
    </citation>
    <scope>IDENTIFICATION OF D-XYLOSE DEHYDROGENASE ACTIVITY</scope>
    <scope>ACTIVITY REGULATION</scope>
    <scope>BIOPHYSICOCHEMICAL PROPERTIES</scope>
    <source>
        <tissue>Liver</tissue>
    </source>
</reference>
<evidence type="ECO:0000269" key="1">
    <source>
    </source>
</evidence>
<evidence type="ECO:0000269" key="2">
    <source>
    </source>
</evidence>
<evidence type="ECO:0000269" key="3">
    <source>
    </source>
</evidence>
<evidence type="ECO:0000305" key="4"/>
<gene>
    <name type="primary">DHDH</name>
    <name type="synonym">2DD</name>
</gene>
<proteinExistence type="evidence at protein level"/>
<feature type="chain" id="PRO_0000315365" description="Trans-1,2-dihydrobenzene-1,2-diol dehydrogenase">
    <location>
        <begin position="1"/>
        <end position="335"/>
    </location>
</feature>
<feature type="site" description="May play an important role in coenzyme binding">
    <location>
        <position position="71"/>
    </location>
</feature>
<feature type="site" description="May play an important role in coenzyme binding">
    <location>
        <position position="79"/>
    </location>
</feature>
<feature type="site" description="May play an important role in coenzyme binding">
    <location>
        <position position="97"/>
    </location>
</feature>
<feature type="site" description="May play an important role for the adaptation of the alcohol substrate into the binding site">
    <location>
        <position position="176"/>
    </location>
</feature>
<feature type="site" description="May play an important role in catalytic activity">
    <location>
        <position position="180"/>
    </location>
</feature>